<dbReference type="EC" id="4.2.1.59" evidence="1"/>
<dbReference type="EMBL" id="CP000724">
    <property type="protein sequence ID" value="ABR46602.1"/>
    <property type="molecule type" value="Genomic_DNA"/>
</dbReference>
<dbReference type="RefSeq" id="WP_011971510.1">
    <property type="nucleotide sequence ID" value="NC_009633.1"/>
</dbReference>
<dbReference type="SMR" id="A6TK84"/>
<dbReference type="STRING" id="293826.Amet_0372"/>
<dbReference type="KEGG" id="amt:Amet_0372"/>
<dbReference type="eggNOG" id="COG0764">
    <property type="taxonomic scope" value="Bacteria"/>
</dbReference>
<dbReference type="HOGENOM" id="CLU_078912_3_0_9"/>
<dbReference type="OrthoDB" id="9772788at2"/>
<dbReference type="Proteomes" id="UP000001572">
    <property type="component" value="Chromosome"/>
</dbReference>
<dbReference type="GO" id="GO:0005737">
    <property type="term" value="C:cytoplasm"/>
    <property type="evidence" value="ECO:0007669"/>
    <property type="project" value="UniProtKB-SubCell"/>
</dbReference>
<dbReference type="GO" id="GO:0016020">
    <property type="term" value="C:membrane"/>
    <property type="evidence" value="ECO:0007669"/>
    <property type="project" value="GOC"/>
</dbReference>
<dbReference type="GO" id="GO:0019171">
    <property type="term" value="F:(3R)-hydroxyacyl-[acyl-carrier-protein] dehydratase activity"/>
    <property type="evidence" value="ECO:0007669"/>
    <property type="project" value="UniProtKB-EC"/>
</dbReference>
<dbReference type="GO" id="GO:0006633">
    <property type="term" value="P:fatty acid biosynthetic process"/>
    <property type="evidence" value="ECO:0007669"/>
    <property type="project" value="UniProtKB-UniRule"/>
</dbReference>
<dbReference type="GO" id="GO:0009245">
    <property type="term" value="P:lipid A biosynthetic process"/>
    <property type="evidence" value="ECO:0007669"/>
    <property type="project" value="UniProtKB-UniRule"/>
</dbReference>
<dbReference type="CDD" id="cd01288">
    <property type="entry name" value="FabZ"/>
    <property type="match status" value="1"/>
</dbReference>
<dbReference type="FunFam" id="3.10.129.10:FF:000001">
    <property type="entry name" value="3-hydroxyacyl-[acyl-carrier-protein] dehydratase FabZ"/>
    <property type="match status" value="1"/>
</dbReference>
<dbReference type="Gene3D" id="3.10.129.10">
    <property type="entry name" value="Hotdog Thioesterase"/>
    <property type="match status" value="1"/>
</dbReference>
<dbReference type="HAMAP" id="MF_00406">
    <property type="entry name" value="FabZ"/>
    <property type="match status" value="1"/>
</dbReference>
<dbReference type="InterPro" id="IPR013114">
    <property type="entry name" value="FabA_FabZ"/>
</dbReference>
<dbReference type="InterPro" id="IPR010084">
    <property type="entry name" value="FabZ"/>
</dbReference>
<dbReference type="InterPro" id="IPR029069">
    <property type="entry name" value="HotDog_dom_sf"/>
</dbReference>
<dbReference type="NCBIfam" id="TIGR01750">
    <property type="entry name" value="fabZ"/>
    <property type="match status" value="1"/>
</dbReference>
<dbReference type="NCBIfam" id="NF000582">
    <property type="entry name" value="PRK00006.1"/>
    <property type="match status" value="1"/>
</dbReference>
<dbReference type="PANTHER" id="PTHR30272">
    <property type="entry name" value="3-HYDROXYACYL-[ACYL-CARRIER-PROTEIN] DEHYDRATASE"/>
    <property type="match status" value="1"/>
</dbReference>
<dbReference type="PANTHER" id="PTHR30272:SF1">
    <property type="entry name" value="3-HYDROXYACYL-[ACYL-CARRIER-PROTEIN] DEHYDRATASE"/>
    <property type="match status" value="1"/>
</dbReference>
<dbReference type="Pfam" id="PF07977">
    <property type="entry name" value="FabA"/>
    <property type="match status" value="1"/>
</dbReference>
<dbReference type="SUPFAM" id="SSF54637">
    <property type="entry name" value="Thioesterase/thiol ester dehydrase-isomerase"/>
    <property type="match status" value="1"/>
</dbReference>
<gene>
    <name evidence="1" type="primary">fabZ</name>
    <name type="ordered locus">Amet_0372</name>
</gene>
<evidence type="ECO:0000255" key="1">
    <source>
        <dbReference type="HAMAP-Rule" id="MF_00406"/>
    </source>
</evidence>
<feature type="chain" id="PRO_0000340756" description="3-hydroxyacyl-[acyl-carrier-protein] dehydratase FabZ">
    <location>
        <begin position="1"/>
        <end position="147"/>
    </location>
</feature>
<feature type="active site" evidence="1">
    <location>
        <position position="49"/>
    </location>
</feature>
<proteinExistence type="inferred from homology"/>
<organism>
    <name type="scientific">Alkaliphilus metalliredigens (strain QYMF)</name>
    <dbReference type="NCBI Taxonomy" id="293826"/>
    <lineage>
        <taxon>Bacteria</taxon>
        <taxon>Bacillati</taxon>
        <taxon>Bacillota</taxon>
        <taxon>Clostridia</taxon>
        <taxon>Peptostreptococcales</taxon>
        <taxon>Natronincolaceae</taxon>
        <taxon>Alkaliphilus</taxon>
    </lineage>
</organism>
<name>FABZ_ALKMQ</name>
<sequence length="147" mass="16140">MELNNIEIQKIIPHRYPFLLVDKMVEVELGKRGVGIKNVTANEPFFQGHFPGNPIMPGVLMTEALAQVAALICMGLEENKGKLGVFTGIDKCKFRRQVVPGDVLRLEIEMTALRRGIGKAEGKAYVGEELACSASLTFALINPNTDK</sequence>
<reference key="1">
    <citation type="journal article" date="2016" name="Genome Announc.">
        <title>Complete genome sequence of Alkaliphilus metalliredigens strain QYMF, an alkaliphilic and metal-reducing bacterium isolated from borax-contaminated leachate ponds.</title>
        <authorList>
            <person name="Hwang C."/>
            <person name="Copeland A."/>
            <person name="Lucas S."/>
            <person name="Lapidus A."/>
            <person name="Barry K."/>
            <person name="Detter J.C."/>
            <person name="Glavina Del Rio T."/>
            <person name="Hammon N."/>
            <person name="Israni S."/>
            <person name="Dalin E."/>
            <person name="Tice H."/>
            <person name="Pitluck S."/>
            <person name="Chertkov O."/>
            <person name="Brettin T."/>
            <person name="Bruce D."/>
            <person name="Han C."/>
            <person name="Schmutz J."/>
            <person name="Larimer F."/>
            <person name="Land M.L."/>
            <person name="Hauser L."/>
            <person name="Kyrpides N."/>
            <person name="Mikhailova N."/>
            <person name="Ye Q."/>
            <person name="Zhou J."/>
            <person name="Richardson P."/>
            <person name="Fields M.W."/>
        </authorList>
    </citation>
    <scope>NUCLEOTIDE SEQUENCE [LARGE SCALE GENOMIC DNA]</scope>
    <source>
        <strain>QYMF</strain>
    </source>
</reference>
<keyword id="KW-0963">Cytoplasm</keyword>
<keyword id="KW-0441">Lipid A biosynthesis</keyword>
<keyword id="KW-0444">Lipid biosynthesis</keyword>
<keyword id="KW-0443">Lipid metabolism</keyword>
<keyword id="KW-0456">Lyase</keyword>
<keyword id="KW-1185">Reference proteome</keyword>
<accession>A6TK84</accession>
<comment type="function">
    <text evidence="1">Involved in unsaturated fatty acids biosynthesis. Catalyzes the dehydration of short chain beta-hydroxyacyl-ACPs and long chain saturated and unsaturated beta-hydroxyacyl-ACPs.</text>
</comment>
<comment type="catalytic activity">
    <reaction evidence="1">
        <text>a (3R)-hydroxyacyl-[ACP] = a (2E)-enoyl-[ACP] + H2O</text>
        <dbReference type="Rhea" id="RHEA:13097"/>
        <dbReference type="Rhea" id="RHEA-COMP:9925"/>
        <dbReference type="Rhea" id="RHEA-COMP:9945"/>
        <dbReference type="ChEBI" id="CHEBI:15377"/>
        <dbReference type="ChEBI" id="CHEBI:78784"/>
        <dbReference type="ChEBI" id="CHEBI:78827"/>
        <dbReference type="EC" id="4.2.1.59"/>
    </reaction>
</comment>
<comment type="subcellular location">
    <subcellularLocation>
        <location evidence="1">Cytoplasm</location>
    </subcellularLocation>
</comment>
<comment type="similarity">
    <text evidence="1">Belongs to the thioester dehydratase family. FabZ subfamily.</text>
</comment>
<protein>
    <recommendedName>
        <fullName evidence="1">3-hydroxyacyl-[acyl-carrier-protein] dehydratase FabZ</fullName>
        <ecNumber evidence="1">4.2.1.59</ecNumber>
    </recommendedName>
    <alternativeName>
        <fullName evidence="1">(3R)-hydroxymyristoyl-[acyl-carrier-protein] dehydratase</fullName>
        <shortName evidence="1">(3R)-hydroxymyristoyl-ACP dehydrase</shortName>
    </alternativeName>
    <alternativeName>
        <fullName evidence="1">Beta-hydroxyacyl-ACP dehydratase</fullName>
    </alternativeName>
</protein>